<proteinExistence type="inferred from homology"/>
<keyword id="KW-0028">Amino-acid biosynthesis</keyword>
<keyword id="KW-0067">ATP-binding</keyword>
<keyword id="KW-0963">Cytoplasm</keyword>
<keyword id="KW-0328">Glycosyltransferase</keyword>
<keyword id="KW-0368">Histidine biosynthesis</keyword>
<keyword id="KW-0547">Nucleotide-binding</keyword>
<keyword id="KW-1185">Reference proteome</keyword>
<keyword id="KW-0808">Transferase</keyword>
<comment type="function">
    <text evidence="1">Catalyzes the condensation of ATP and 5-phosphoribose 1-diphosphate to form N'-(5'-phosphoribosyl)-ATP (PR-ATP). Has a crucial role in the pathway because the rate of histidine biosynthesis seems to be controlled primarily by regulation of the enzymatic activity (By similarity).</text>
</comment>
<comment type="catalytic activity">
    <reaction>
        <text>1-(5-phospho-beta-D-ribosyl)-ATP + diphosphate = 5-phospho-alpha-D-ribose 1-diphosphate + ATP</text>
        <dbReference type="Rhea" id="RHEA:18473"/>
        <dbReference type="ChEBI" id="CHEBI:30616"/>
        <dbReference type="ChEBI" id="CHEBI:33019"/>
        <dbReference type="ChEBI" id="CHEBI:58017"/>
        <dbReference type="ChEBI" id="CHEBI:73183"/>
        <dbReference type="EC" id="2.4.2.17"/>
    </reaction>
</comment>
<comment type="pathway">
    <text>Amino-acid biosynthesis; L-histidine biosynthesis; L-histidine from 5-phospho-alpha-D-ribose 1-diphosphate: step 1/9.</text>
</comment>
<comment type="subcellular location">
    <subcellularLocation>
        <location evidence="1">Cytoplasm</location>
    </subcellularLocation>
</comment>
<comment type="similarity">
    <text evidence="2">Belongs to the ATP phosphoribosyltransferase family.</text>
</comment>
<evidence type="ECO:0000250" key="1"/>
<evidence type="ECO:0000305" key="2"/>
<name>HIS1_KLULA</name>
<protein>
    <recommendedName>
        <fullName>ATP phosphoribosyltransferase</fullName>
        <shortName>ATP-PRT</shortName>
        <shortName>ATP-PRTase</shortName>
        <ecNumber>2.4.2.17</ecNumber>
    </recommendedName>
</protein>
<gene>
    <name type="primary">HIS1</name>
    <name type="ordered locus">KLLA0F27489g</name>
</gene>
<organism>
    <name type="scientific">Kluyveromyces lactis (strain ATCC 8585 / CBS 2359 / DSM 70799 / NBRC 1267 / NRRL Y-1140 / WM37)</name>
    <name type="common">Yeast</name>
    <name type="synonym">Candida sphaerica</name>
    <dbReference type="NCBI Taxonomy" id="284590"/>
    <lineage>
        <taxon>Eukaryota</taxon>
        <taxon>Fungi</taxon>
        <taxon>Dikarya</taxon>
        <taxon>Ascomycota</taxon>
        <taxon>Saccharomycotina</taxon>
        <taxon>Saccharomycetes</taxon>
        <taxon>Saccharomycetales</taxon>
        <taxon>Saccharomycetaceae</taxon>
        <taxon>Kluyveromyces</taxon>
    </lineage>
</organism>
<sequence>MDLVNHLNDKLLFAIPKKGRLYEKSVSILKGSDIKFHRSARLDIAISTNMPVALIFLPAADIPMFVGEGRCDLGITGVDQVRESEVDVNLPIDLQFGTCKLQVQVPVAGEYTSPEQLIGKTIVSSFVNLTKKYFAQLEGVPESEMVTRVKYVGGSVEASCALGVADAIVDLVESGETMRAAGLTAIATVLDTSAHLIESKNPKGDVELLRTIKSRIEGVMTAQKYVSCSYNAPENKLPELLKITPGRRAPTISQINDSGWVAVSSMIERKNKGDIMDDLKKNGAEDIMVFEISNCRV</sequence>
<dbReference type="EC" id="2.4.2.17"/>
<dbReference type="EMBL" id="CR382126">
    <property type="protein sequence ID" value="CAG99011.1"/>
    <property type="molecule type" value="Genomic_DNA"/>
</dbReference>
<dbReference type="RefSeq" id="XP_456303.1">
    <property type="nucleotide sequence ID" value="XM_456303.1"/>
</dbReference>
<dbReference type="SMR" id="Q6CID6"/>
<dbReference type="FunCoup" id="Q6CID6">
    <property type="interactions" value="221"/>
</dbReference>
<dbReference type="STRING" id="284590.Q6CID6"/>
<dbReference type="PaxDb" id="284590-Q6CID6"/>
<dbReference type="KEGG" id="kla:KLLA0_F27489g"/>
<dbReference type="eggNOG" id="KOG2831">
    <property type="taxonomic scope" value="Eukaryota"/>
</dbReference>
<dbReference type="HOGENOM" id="CLU_038115_1_2_1"/>
<dbReference type="InParanoid" id="Q6CID6"/>
<dbReference type="OMA" id="YVMMDYD"/>
<dbReference type="UniPathway" id="UPA00031">
    <property type="reaction ID" value="UER00006"/>
</dbReference>
<dbReference type="Proteomes" id="UP000000598">
    <property type="component" value="Chromosome F"/>
</dbReference>
<dbReference type="GO" id="GO:0005737">
    <property type="term" value="C:cytoplasm"/>
    <property type="evidence" value="ECO:0007669"/>
    <property type="project" value="UniProtKB-SubCell"/>
</dbReference>
<dbReference type="GO" id="GO:0005524">
    <property type="term" value="F:ATP binding"/>
    <property type="evidence" value="ECO:0007669"/>
    <property type="project" value="UniProtKB-KW"/>
</dbReference>
<dbReference type="GO" id="GO:0003879">
    <property type="term" value="F:ATP phosphoribosyltransferase activity"/>
    <property type="evidence" value="ECO:0007669"/>
    <property type="project" value="UniProtKB-EC"/>
</dbReference>
<dbReference type="GO" id="GO:0000287">
    <property type="term" value="F:magnesium ion binding"/>
    <property type="evidence" value="ECO:0007669"/>
    <property type="project" value="InterPro"/>
</dbReference>
<dbReference type="GO" id="GO:0000105">
    <property type="term" value="P:L-histidine biosynthetic process"/>
    <property type="evidence" value="ECO:0007669"/>
    <property type="project" value="UniProtKB-UniPathway"/>
</dbReference>
<dbReference type="FunFam" id="3.30.70.120:FF:000003">
    <property type="entry name" value="ATP phosphoribosyltransferase"/>
    <property type="match status" value="1"/>
</dbReference>
<dbReference type="FunFam" id="3.40.190.10:FF:000123">
    <property type="entry name" value="HIS1p ATP phosphoribosyltransferase"/>
    <property type="match status" value="1"/>
</dbReference>
<dbReference type="Gene3D" id="3.30.70.120">
    <property type="match status" value="1"/>
</dbReference>
<dbReference type="Gene3D" id="3.40.190.10">
    <property type="entry name" value="Periplasmic binding protein-like II"/>
    <property type="match status" value="2"/>
</dbReference>
<dbReference type="HAMAP" id="MF_00079">
    <property type="entry name" value="HisG_Long"/>
    <property type="match status" value="1"/>
</dbReference>
<dbReference type="InterPro" id="IPR020621">
    <property type="entry name" value="ATP-PRT_HisG_long"/>
</dbReference>
<dbReference type="InterPro" id="IPR013820">
    <property type="entry name" value="ATP_PRibTrfase_cat"/>
</dbReference>
<dbReference type="InterPro" id="IPR018198">
    <property type="entry name" value="ATP_PRibTrfase_CS"/>
</dbReference>
<dbReference type="InterPro" id="IPR001348">
    <property type="entry name" value="ATP_PRibTrfase_HisG"/>
</dbReference>
<dbReference type="InterPro" id="IPR013115">
    <property type="entry name" value="HisG_C"/>
</dbReference>
<dbReference type="InterPro" id="IPR011322">
    <property type="entry name" value="N-reg_PII-like_a/b"/>
</dbReference>
<dbReference type="InterPro" id="IPR015867">
    <property type="entry name" value="N-reg_PII/ATP_PRibTrfase_C"/>
</dbReference>
<dbReference type="NCBIfam" id="TIGR00070">
    <property type="entry name" value="hisG"/>
    <property type="match status" value="1"/>
</dbReference>
<dbReference type="NCBIfam" id="TIGR03455">
    <property type="entry name" value="HisG_C-term"/>
    <property type="match status" value="1"/>
</dbReference>
<dbReference type="PANTHER" id="PTHR21403:SF8">
    <property type="entry name" value="ATP PHOSPHORIBOSYLTRANSFERASE"/>
    <property type="match status" value="1"/>
</dbReference>
<dbReference type="PANTHER" id="PTHR21403">
    <property type="entry name" value="ATP PHOSPHORIBOSYLTRANSFERASE ATP-PRTASE"/>
    <property type="match status" value="1"/>
</dbReference>
<dbReference type="Pfam" id="PF01634">
    <property type="entry name" value="HisG"/>
    <property type="match status" value="1"/>
</dbReference>
<dbReference type="Pfam" id="PF08029">
    <property type="entry name" value="HisG_C"/>
    <property type="match status" value="1"/>
</dbReference>
<dbReference type="SUPFAM" id="SSF54913">
    <property type="entry name" value="GlnB-like"/>
    <property type="match status" value="1"/>
</dbReference>
<dbReference type="SUPFAM" id="SSF53850">
    <property type="entry name" value="Periplasmic binding protein-like II"/>
    <property type="match status" value="1"/>
</dbReference>
<dbReference type="PROSITE" id="PS01316">
    <property type="entry name" value="ATP_P_PHORIBOSYLTR"/>
    <property type="match status" value="1"/>
</dbReference>
<feature type="chain" id="PRO_0000151955" description="ATP phosphoribosyltransferase">
    <location>
        <begin position="1"/>
        <end position="297"/>
    </location>
</feature>
<accession>Q6CID6</accession>
<reference key="1">
    <citation type="journal article" date="2004" name="Nature">
        <title>Genome evolution in yeasts.</title>
        <authorList>
            <person name="Dujon B."/>
            <person name="Sherman D."/>
            <person name="Fischer G."/>
            <person name="Durrens P."/>
            <person name="Casaregola S."/>
            <person name="Lafontaine I."/>
            <person name="de Montigny J."/>
            <person name="Marck C."/>
            <person name="Neuveglise C."/>
            <person name="Talla E."/>
            <person name="Goffard N."/>
            <person name="Frangeul L."/>
            <person name="Aigle M."/>
            <person name="Anthouard V."/>
            <person name="Babour A."/>
            <person name="Barbe V."/>
            <person name="Barnay S."/>
            <person name="Blanchin S."/>
            <person name="Beckerich J.-M."/>
            <person name="Beyne E."/>
            <person name="Bleykasten C."/>
            <person name="Boisrame A."/>
            <person name="Boyer J."/>
            <person name="Cattolico L."/>
            <person name="Confanioleri F."/>
            <person name="de Daruvar A."/>
            <person name="Despons L."/>
            <person name="Fabre E."/>
            <person name="Fairhead C."/>
            <person name="Ferry-Dumazet H."/>
            <person name="Groppi A."/>
            <person name="Hantraye F."/>
            <person name="Hennequin C."/>
            <person name="Jauniaux N."/>
            <person name="Joyet P."/>
            <person name="Kachouri R."/>
            <person name="Kerrest A."/>
            <person name="Koszul R."/>
            <person name="Lemaire M."/>
            <person name="Lesur I."/>
            <person name="Ma L."/>
            <person name="Muller H."/>
            <person name="Nicaud J.-M."/>
            <person name="Nikolski M."/>
            <person name="Oztas S."/>
            <person name="Ozier-Kalogeropoulos O."/>
            <person name="Pellenz S."/>
            <person name="Potier S."/>
            <person name="Richard G.-F."/>
            <person name="Straub M.-L."/>
            <person name="Suleau A."/>
            <person name="Swennen D."/>
            <person name="Tekaia F."/>
            <person name="Wesolowski-Louvel M."/>
            <person name="Westhof E."/>
            <person name="Wirth B."/>
            <person name="Zeniou-Meyer M."/>
            <person name="Zivanovic Y."/>
            <person name="Bolotin-Fukuhara M."/>
            <person name="Thierry A."/>
            <person name="Bouchier C."/>
            <person name="Caudron B."/>
            <person name="Scarpelli C."/>
            <person name="Gaillardin C."/>
            <person name="Weissenbach J."/>
            <person name="Wincker P."/>
            <person name="Souciet J.-L."/>
        </authorList>
    </citation>
    <scope>NUCLEOTIDE SEQUENCE [LARGE SCALE GENOMIC DNA]</scope>
    <source>
        <strain>ATCC 8585 / CBS 2359 / DSM 70799 / NBRC 1267 / NRRL Y-1140 / WM37</strain>
    </source>
</reference>